<name>H2B01_CYRHA</name>
<organism>
    <name type="scientific">Cyriopagopus hainanus</name>
    <name type="common">Chinese bird spider</name>
    <name type="synonym">Haplopelma hainanum</name>
    <dbReference type="NCBI Taxonomy" id="209901"/>
    <lineage>
        <taxon>Eukaryota</taxon>
        <taxon>Metazoa</taxon>
        <taxon>Ecdysozoa</taxon>
        <taxon>Arthropoda</taxon>
        <taxon>Chelicerata</taxon>
        <taxon>Arachnida</taxon>
        <taxon>Araneae</taxon>
        <taxon>Mygalomorphae</taxon>
        <taxon>Theraphosidae</taxon>
        <taxon>Haplopelma</taxon>
    </lineage>
</organism>
<accession>D2Y213</accession>
<keyword id="KW-1015">Disulfide bond</keyword>
<keyword id="KW-0528">Neurotoxin</keyword>
<keyword id="KW-0629">Postsynaptic neurotoxin</keyword>
<keyword id="KW-0964">Secreted</keyword>
<keyword id="KW-0732">Signal</keyword>
<keyword id="KW-0800">Toxin</keyword>
<evidence type="ECO:0000250" key="1"/>
<evidence type="ECO:0000255" key="2"/>
<evidence type="ECO:0000305" key="3"/>
<reference key="1">
    <citation type="journal article" date="2010" name="J. Proteome Res.">
        <title>Molecular diversification of peptide toxins from the tarantula Haplopelma hainanum (Ornithoctonus hainana) venom based on transcriptomic, peptidomic, and genomic analyses.</title>
        <authorList>
            <person name="Tang X."/>
            <person name="Zhang Y."/>
            <person name="Hu W."/>
            <person name="Xu D."/>
            <person name="Tao H."/>
            <person name="Yang X."/>
            <person name="Li Y."/>
            <person name="Jiang L."/>
            <person name="Liang S."/>
        </authorList>
    </citation>
    <scope>NUCLEOTIDE SEQUENCE [LARGE SCALE MRNA]</scope>
    <source>
        <tissue>Venom gland</tissue>
    </source>
</reference>
<feature type="signal peptide" evidence="2">
    <location>
        <begin position="1"/>
        <end position="22"/>
    </location>
</feature>
<feature type="propeptide" id="PRO_0000400767" evidence="1">
    <location>
        <begin position="23"/>
        <end position="47"/>
    </location>
</feature>
<feature type="peptide" id="PRO_0000400768" description="U4-theraphotoxin-Hhn1aa">
    <location>
        <begin position="48"/>
        <end position="84"/>
    </location>
</feature>
<feature type="disulfide bond" evidence="1">
    <location>
        <begin position="51"/>
        <end position="65"/>
    </location>
</feature>
<feature type="disulfide bond" evidence="1">
    <location>
        <begin position="55"/>
        <end position="76"/>
    </location>
</feature>
<proteinExistence type="evidence at transcript level"/>
<dbReference type="EMBL" id="GU292890">
    <property type="protein sequence ID" value="ADB56706.1"/>
    <property type="molecule type" value="mRNA"/>
</dbReference>
<dbReference type="SMR" id="D2Y213"/>
<dbReference type="ArachnoServer" id="AS001893">
    <property type="toxin name" value="U4-theraphotoxin-Hhn1aa"/>
</dbReference>
<dbReference type="GO" id="GO:0005576">
    <property type="term" value="C:extracellular region"/>
    <property type="evidence" value="ECO:0007669"/>
    <property type="project" value="UniProtKB-SubCell"/>
</dbReference>
<dbReference type="GO" id="GO:0035792">
    <property type="term" value="C:host cell postsynaptic membrane"/>
    <property type="evidence" value="ECO:0007669"/>
    <property type="project" value="UniProtKB-KW"/>
</dbReference>
<dbReference type="GO" id="GO:0090729">
    <property type="term" value="F:toxin activity"/>
    <property type="evidence" value="ECO:0007669"/>
    <property type="project" value="UniProtKB-KW"/>
</dbReference>
<dbReference type="InterPro" id="IPR012625">
    <property type="entry name" value="Hwtx-2-like"/>
</dbReference>
<dbReference type="Pfam" id="PF08089">
    <property type="entry name" value="Toxin_20"/>
    <property type="match status" value="1"/>
</dbReference>
<dbReference type="SUPFAM" id="SSF57059">
    <property type="entry name" value="omega toxin-like"/>
    <property type="match status" value="1"/>
</dbReference>
<protein>
    <recommendedName>
        <fullName>U4-theraphotoxin-Hhn1aa</fullName>
        <shortName>U4-TRTX-Hhn1aa</shortName>
    </recommendedName>
    <alternativeName>
        <fullName>Hainantoxin-II-2</fullName>
        <shortName>HNTX-II-2</shortName>
    </alternativeName>
</protein>
<sequence length="84" mass="9380">MKVTLIAILTCAAVLVLHTTAAEELEESQLMEVGMPDTELAAVDEERLFECSVSCEIEKEGNKDCKKKKRKGGWKCKFNMCVKV</sequence>
<comment type="function">
    <text evidence="1">Postsynaptic neurotoxin.</text>
</comment>
<comment type="subcellular location">
    <subcellularLocation>
        <location evidence="1">Secreted</location>
    </subcellularLocation>
</comment>
<comment type="tissue specificity">
    <text>Expressed by the venom gland.</text>
</comment>
<comment type="similarity">
    <text evidence="3">Belongs to the neurotoxin 12 (Hwtx-2) family. 02 (Hwtx-2) subfamily.</text>
</comment>